<name>EFTS_TROWT</name>
<protein>
    <recommendedName>
        <fullName evidence="1">Elongation factor Ts</fullName>
        <shortName evidence="1">EF-Ts</shortName>
    </recommendedName>
</protein>
<proteinExistence type="inferred from homology"/>
<comment type="function">
    <text evidence="1">Associates with the EF-Tu.GDP complex and induces the exchange of GDP to GTP. It remains bound to the aminoacyl-tRNA.EF-Tu.GTP complex up to the GTP hydrolysis stage on the ribosome.</text>
</comment>
<comment type="subcellular location">
    <subcellularLocation>
        <location evidence="1">Cytoplasm</location>
    </subcellularLocation>
</comment>
<comment type="similarity">
    <text evidence="1">Belongs to the EF-Ts family.</text>
</comment>
<feature type="chain" id="PRO_0000161227" description="Elongation factor Ts">
    <location>
        <begin position="1"/>
        <end position="273"/>
    </location>
</feature>
<feature type="region of interest" description="Involved in Mg(2+) ion dislocation from EF-Tu" evidence="1">
    <location>
        <begin position="80"/>
        <end position="83"/>
    </location>
</feature>
<sequence length="273" mass="30065">MVDISMADVRLLRERLGVGVMDSRNALIEAGGDIERAVEILRLKGLKSAEKREGRSVSEGLVVSRQFATHAVLAELCCETDFVAKSDRFLALSEKVADLVSDADSLETALRVRCDEGSVADLIALEAAVLGENVALRRFARVEGSRFSVYMHRTSSDLPPQVGVILAYEGHDDATARFIAQHIAFAAPEYLSVGDIPQGILQRERDLLTEISRGEGKPEEVLPQIVEGRLVKLYKQNVLLEQDYVRDNKVTISKVLEATGLRVISFARFRVGT</sequence>
<reference key="1">
    <citation type="journal article" date="2003" name="Genome Res.">
        <title>Tropheryma whipplei twist: a human pathogenic Actinobacteria with a reduced genome.</title>
        <authorList>
            <person name="Raoult D."/>
            <person name="Ogata H."/>
            <person name="Audic S."/>
            <person name="Robert C."/>
            <person name="Suhre K."/>
            <person name="Drancourt M."/>
            <person name="Claverie J.-M."/>
        </authorList>
    </citation>
    <scope>NUCLEOTIDE SEQUENCE [LARGE SCALE GENOMIC DNA]</scope>
    <source>
        <strain>Twist</strain>
    </source>
</reference>
<organism>
    <name type="scientific">Tropheryma whipplei (strain Twist)</name>
    <name type="common">Whipple's bacillus</name>
    <dbReference type="NCBI Taxonomy" id="203267"/>
    <lineage>
        <taxon>Bacteria</taxon>
        <taxon>Bacillati</taxon>
        <taxon>Actinomycetota</taxon>
        <taxon>Actinomycetes</taxon>
        <taxon>Micrococcales</taxon>
        <taxon>Tropherymataceae</taxon>
        <taxon>Tropheryma</taxon>
    </lineage>
</organism>
<keyword id="KW-0963">Cytoplasm</keyword>
<keyword id="KW-0251">Elongation factor</keyword>
<keyword id="KW-0648">Protein biosynthesis</keyword>
<keyword id="KW-1185">Reference proteome</keyword>
<gene>
    <name evidence="1" type="primary">tsf</name>
    <name type="ordered locus">TWT_448</name>
</gene>
<dbReference type="EMBL" id="AE014184">
    <property type="protein sequence ID" value="AAO44545.1"/>
    <property type="molecule type" value="Genomic_DNA"/>
</dbReference>
<dbReference type="RefSeq" id="WP_011102578.1">
    <property type="nucleotide sequence ID" value="NC_004572.3"/>
</dbReference>
<dbReference type="SMR" id="Q83MV5"/>
<dbReference type="STRING" id="203267.TWT_448"/>
<dbReference type="KEGG" id="twh:TWT_448"/>
<dbReference type="eggNOG" id="COG0264">
    <property type="taxonomic scope" value="Bacteria"/>
</dbReference>
<dbReference type="HOGENOM" id="CLU_047155_0_0_11"/>
<dbReference type="OrthoDB" id="9808348at2"/>
<dbReference type="Proteomes" id="UP000002200">
    <property type="component" value="Chromosome"/>
</dbReference>
<dbReference type="GO" id="GO:0005737">
    <property type="term" value="C:cytoplasm"/>
    <property type="evidence" value="ECO:0007669"/>
    <property type="project" value="UniProtKB-SubCell"/>
</dbReference>
<dbReference type="GO" id="GO:0003746">
    <property type="term" value="F:translation elongation factor activity"/>
    <property type="evidence" value="ECO:0007669"/>
    <property type="project" value="UniProtKB-UniRule"/>
</dbReference>
<dbReference type="FunFam" id="1.10.8.10:FF:000001">
    <property type="entry name" value="Elongation factor Ts"/>
    <property type="match status" value="1"/>
</dbReference>
<dbReference type="Gene3D" id="1.10.286.20">
    <property type="match status" value="1"/>
</dbReference>
<dbReference type="Gene3D" id="1.10.8.10">
    <property type="entry name" value="DNA helicase RuvA subunit, C-terminal domain"/>
    <property type="match status" value="1"/>
</dbReference>
<dbReference type="Gene3D" id="3.30.479.20">
    <property type="entry name" value="Elongation factor Ts, dimerisation domain"/>
    <property type="match status" value="2"/>
</dbReference>
<dbReference type="HAMAP" id="MF_00050">
    <property type="entry name" value="EF_Ts"/>
    <property type="match status" value="1"/>
</dbReference>
<dbReference type="InterPro" id="IPR036402">
    <property type="entry name" value="EF-Ts_dimer_sf"/>
</dbReference>
<dbReference type="InterPro" id="IPR001816">
    <property type="entry name" value="Transl_elong_EFTs/EF1B"/>
</dbReference>
<dbReference type="InterPro" id="IPR014039">
    <property type="entry name" value="Transl_elong_EFTs/EF1B_dimer"/>
</dbReference>
<dbReference type="InterPro" id="IPR018101">
    <property type="entry name" value="Transl_elong_Ts_CS"/>
</dbReference>
<dbReference type="InterPro" id="IPR009060">
    <property type="entry name" value="UBA-like_sf"/>
</dbReference>
<dbReference type="NCBIfam" id="TIGR00116">
    <property type="entry name" value="tsf"/>
    <property type="match status" value="1"/>
</dbReference>
<dbReference type="PANTHER" id="PTHR11741">
    <property type="entry name" value="ELONGATION FACTOR TS"/>
    <property type="match status" value="1"/>
</dbReference>
<dbReference type="PANTHER" id="PTHR11741:SF0">
    <property type="entry name" value="ELONGATION FACTOR TS, MITOCHONDRIAL"/>
    <property type="match status" value="1"/>
</dbReference>
<dbReference type="Pfam" id="PF00889">
    <property type="entry name" value="EF_TS"/>
    <property type="match status" value="1"/>
</dbReference>
<dbReference type="SUPFAM" id="SSF54713">
    <property type="entry name" value="Elongation factor Ts (EF-Ts), dimerisation domain"/>
    <property type="match status" value="1"/>
</dbReference>
<dbReference type="SUPFAM" id="SSF46934">
    <property type="entry name" value="UBA-like"/>
    <property type="match status" value="1"/>
</dbReference>
<dbReference type="PROSITE" id="PS01127">
    <property type="entry name" value="EF_TS_2"/>
    <property type="match status" value="1"/>
</dbReference>
<accession>Q83MV5</accession>
<evidence type="ECO:0000255" key="1">
    <source>
        <dbReference type="HAMAP-Rule" id="MF_00050"/>
    </source>
</evidence>